<feature type="chain" id="PRO_1000023471" description="3-dehydroquinate dehydratase">
    <location>
        <begin position="1"/>
        <end position="150"/>
    </location>
</feature>
<feature type="active site" description="Proton acceptor" evidence="1">
    <location>
        <position position="26"/>
    </location>
</feature>
<feature type="active site" description="Proton donor" evidence="1">
    <location>
        <position position="103"/>
    </location>
</feature>
<feature type="binding site" evidence="1">
    <location>
        <position position="77"/>
    </location>
    <ligand>
        <name>substrate</name>
    </ligand>
</feature>
<feature type="binding site" evidence="1">
    <location>
        <position position="83"/>
    </location>
    <ligand>
        <name>substrate</name>
    </ligand>
</feature>
<feature type="binding site" evidence="1">
    <location>
        <position position="90"/>
    </location>
    <ligand>
        <name>substrate</name>
    </ligand>
</feature>
<feature type="binding site" evidence="1">
    <location>
        <begin position="104"/>
        <end position="105"/>
    </location>
    <ligand>
        <name>substrate</name>
    </ligand>
</feature>
<feature type="binding site" evidence="1">
    <location>
        <position position="114"/>
    </location>
    <ligand>
        <name>substrate</name>
    </ligand>
</feature>
<feature type="site" description="Transition state stabilizer" evidence="1">
    <location>
        <position position="21"/>
    </location>
</feature>
<keyword id="KW-0028">Amino-acid biosynthesis</keyword>
<keyword id="KW-0057">Aromatic amino acid biosynthesis</keyword>
<keyword id="KW-0456">Lyase</keyword>
<sequence>MSRYAKILLLNGPNLNMLGKREPTHYGNLSLEDIEQRMQELAQQHQLELSCFQANSEEKLIDKIHQSFHLIDFIIINPAAYTHTSVALRDALLSVSIPFVEVHLSNIHRREPFRHHSYLSDIAEGVICGLGAQGYEFALQYASNYLKKIK</sequence>
<protein>
    <recommendedName>
        <fullName evidence="1">3-dehydroquinate dehydratase</fullName>
        <shortName evidence="1">3-dehydroquinase</shortName>
        <ecNumber evidence="1">4.2.1.10</ecNumber>
    </recommendedName>
    <alternativeName>
        <fullName evidence="1">Type II DHQase</fullName>
    </alternativeName>
</protein>
<reference key="1">
    <citation type="journal article" date="2007" name="J. Bacteriol.">
        <title>Complete genome sequence of Haemophilus somnus (Histophilus somni) strain 129Pt and comparison to Haemophilus ducreyi 35000HP and Haemophilus influenzae Rd.</title>
        <authorList>
            <person name="Challacombe J.F."/>
            <person name="Duncan A.J."/>
            <person name="Brettin T.S."/>
            <person name="Bruce D."/>
            <person name="Chertkov O."/>
            <person name="Detter J.C."/>
            <person name="Han C.S."/>
            <person name="Misra M."/>
            <person name="Richardson P."/>
            <person name="Tapia R."/>
            <person name="Thayer N."/>
            <person name="Xie G."/>
            <person name="Inzana T.J."/>
        </authorList>
    </citation>
    <scope>NUCLEOTIDE SEQUENCE [LARGE SCALE GENOMIC DNA]</scope>
    <source>
        <strain>129Pt</strain>
    </source>
</reference>
<evidence type="ECO:0000255" key="1">
    <source>
        <dbReference type="HAMAP-Rule" id="MF_00169"/>
    </source>
</evidence>
<proteinExistence type="inferred from homology"/>
<accession>Q0I1Y1</accession>
<organism>
    <name type="scientific">Histophilus somni (strain 129Pt)</name>
    <name type="common">Haemophilus somnus</name>
    <dbReference type="NCBI Taxonomy" id="205914"/>
    <lineage>
        <taxon>Bacteria</taxon>
        <taxon>Pseudomonadati</taxon>
        <taxon>Pseudomonadota</taxon>
        <taxon>Gammaproteobacteria</taxon>
        <taxon>Pasteurellales</taxon>
        <taxon>Pasteurellaceae</taxon>
        <taxon>Histophilus</taxon>
    </lineage>
</organism>
<comment type="function">
    <text evidence="1">Catalyzes a trans-dehydration via an enolate intermediate.</text>
</comment>
<comment type="catalytic activity">
    <reaction evidence="1">
        <text>3-dehydroquinate = 3-dehydroshikimate + H2O</text>
        <dbReference type="Rhea" id="RHEA:21096"/>
        <dbReference type="ChEBI" id="CHEBI:15377"/>
        <dbReference type="ChEBI" id="CHEBI:16630"/>
        <dbReference type="ChEBI" id="CHEBI:32364"/>
        <dbReference type="EC" id="4.2.1.10"/>
    </reaction>
</comment>
<comment type="pathway">
    <text evidence="1">Metabolic intermediate biosynthesis; chorismate biosynthesis; chorismate from D-erythrose 4-phosphate and phosphoenolpyruvate: step 3/7.</text>
</comment>
<comment type="subunit">
    <text evidence="1">Homododecamer.</text>
</comment>
<comment type="similarity">
    <text evidence="1">Belongs to the type-II 3-dehydroquinase family.</text>
</comment>
<name>AROQ_HISS1</name>
<gene>
    <name evidence="1" type="primary">aroQ</name>
    <name type="ordered locus">HS_0570</name>
</gene>
<dbReference type="EC" id="4.2.1.10" evidence="1"/>
<dbReference type="EMBL" id="CP000436">
    <property type="protein sequence ID" value="ABI24847.1"/>
    <property type="molecule type" value="Genomic_DNA"/>
</dbReference>
<dbReference type="SMR" id="Q0I1Y1"/>
<dbReference type="KEGG" id="hso:HS_0570"/>
<dbReference type="eggNOG" id="COG0757">
    <property type="taxonomic scope" value="Bacteria"/>
</dbReference>
<dbReference type="HOGENOM" id="CLU_090968_1_0_6"/>
<dbReference type="UniPathway" id="UPA00053">
    <property type="reaction ID" value="UER00086"/>
</dbReference>
<dbReference type="GO" id="GO:0003855">
    <property type="term" value="F:3-dehydroquinate dehydratase activity"/>
    <property type="evidence" value="ECO:0007669"/>
    <property type="project" value="UniProtKB-UniRule"/>
</dbReference>
<dbReference type="GO" id="GO:0008652">
    <property type="term" value="P:amino acid biosynthetic process"/>
    <property type="evidence" value="ECO:0007669"/>
    <property type="project" value="UniProtKB-KW"/>
</dbReference>
<dbReference type="GO" id="GO:0009073">
    <property type="term" value="P:aromatic amino acid family biosynthetic process"/>
    <property type="evidence" value="ECO:0007669"/>
    <property type="project" value="UniProtKB-KW"/>
</dbReference>
<dbReference type="GO" id="GO:0009423">
    <property type="term" value="P:chorismate biosynthetic process"/>
    <property type="evidence" value="ECO:0007669"/>
    <property type="project" value="UniProtKB-UniRule"/>
</dbReference>
<dbReference type="GO" id="GO:0019631">
    <property type="term" value="P:quinate catabolic process"/>
    <property type="evidence" value="ECO:0007669"/>
    <property type="project" value="TreeGrafter"/>
</dbReference>
<dbReference type="CDD" id="cd00466">
    <property type="entry name" value="DHQase_II"/>
    <property type="match status" value="1"/>
</dbReference>
<dbReference type="Gene3D" id="3.40.50.9100">
    <property type="entry name" value="Dehydroquinase, class II"/>
    <property type="match status" value="1"/>
</dbReference>
<dbReference type="HAMAP" id="MF_00169">
    <property type="entry name" value="AroQ"/>
    <property type="match status" value="1"/>
</dbReference>
<dbReference type="InterPro" id="IPR001874">
    <property type="entry name" value="DHquinase_II"/>
</dbReference>
<dbReference type="InterPro" id="IPR018509">
    <property type="entry name" value="DHquinase_II_CS"/>
</dbReference>
<dbReference type="InterPro" id="IPR036441">
    <property type="entry name" value="DHquinase_II_sf"/>
</dbReference>
<dbReference type="NCBIfam" id="TIGR01088">
    <property type="entry name" value="aroQ"/>
    <property type="match status" value="1"/>
</dbReference>
<dbReference type="NCBIfam" id="NF003804">
    <property type="entry name" value="PRK05395.1-1"/>
    <property type="match status" value="1"/>
</dbReference>
<dbReference type="NCBIfam" id="NF003805">
    <property type="entry name" value="PRK05395.1-2"/>
    <property type="match status" value="1"/>
</dbReference>
<dbReference type="NCBIfam" id="NF003806">
    <property type="entry name" value="PRK05395.1-3"/>
    <property type="match status" value="1"/>
</dbReference>
<dbReference type="NCBIfam" id="NF003807">
    <property type="entry name" value="PRK05395.1-4"/>
    <property type="match status" value="1"/>
</dbReference>
<dbReference type="PANTHER" id="PTHR21272">
    <property type="entry name" value="CATABOLIC 3-DEHYDROQUINASE"/>
    <property type="match status" value="1"/>
</dbReference>
<dbReference type="PANTHER" id="PTHR21272:SF3">
    <property type="entry name" value="CATABOLIC 3-DEHYDROQUINASE"/>
    <property type="match status" value="1"/>
</dbReference>
<dbReference type="Pfam" id="PF01220">
    <property type="entry name" value="DHquinase_II"/>
    <property type="match status" value="1"/>
</dbReference>
<dbReference type="PIRSF" id="PIRSF001399">
    <property type="entry name" value="DHquinase_II"/>
    <property type="match status" value="1"/>
</dbReference>
<dbReference type="SUPFAM" id="SSF52304">
    <property type="entry name" value="Type II 3-dehydroquinate dehydratase"/>
    <property type="match status" value="1"/>
</dbReference>
<dbReference type="PROSITE" id="PS01029">
    <property type="entry name" value="DEHYDROQUINASE_II"/>
    <property type="match status" value="1"/>
</dbReference>